<organism>
    <name type="scientific">Xenopus tropicalis</name>
    <name type="common">Western clawed frog</name>
    <name type="synonym">Silurana tropicalis</name>
    <dbReference type="NCBI Taxonomy" id="8364"/>
    <lineage>
        <taxon>Eukaryota</taxon>
        <taxon>Metazoa</taxon>
        <taxon>Chordata</taxon>
        <taxon>Craniata</taxon>
        <taxon>Vertebrata</taxon>
        <taxon>Euteleostomi</taxon>
        <taxon>Amphibia</taxon>
        <taxon>Batrachia</taxon>
        <taxon>Anura</taxon>
        <taxon>Pipoidea</taxon>
        <taxon>Pipidae</taxon>
        <taxon>Xenopodinae</taxon>
        <taxon>Xenopus</taxon>
        <taxon>Silurana</taxon>
    </lineage>
</organism>
<dbReference type="EMBL" id="BC167327">
    <property type="protein sequence ID" value="AAI67327.1"/>
    <property type="molecule type" value="mRNA"/>
</dbReference>
<dbReference type="SMR" id="B3DL65"/>
<dbReference type="FunCoup" id="B3DL65">
    <property type="interactions" value="1089"/>
</dbReference>
<dbReference type="InParanoid" id="B3DL65"/>
<dbReference type="Proteomes" id="UP000008143">
    <property type="component" value="Unplaced"/>
</dbReference>
<dbReference type="GO" id="GO:0005758">
    <property type="term" value="C:mitochondrial intermembrane space"/>
    <property type="evidence" value="ECO:0007669"/>
    <property type="project" value="InterPro"/>
</dbReference>
<dbReference type="InterPro" id="IPR019171">
    <property type="entry name" value="MIX23"/>
</dbReference>
<dbReference type="PANTHER" id="PTHR31905">
    <property type="entry name" value="COILED-COIL DOMAIN-CONTAINING PROTEIN 58"/>
    <property type="match status" value="1"/>
</dbReference>
<dbReference type="PANTHER" id="PTHR31905:SF2">
    <property type="entry name" value="PROTEIN MIX23"/>
    <property type="match status" value="1"/>
</dbReference>
<dbReference type="Pfam" id="PF09774">
    <property type="entry name" value="MIX23"/>
    <property type="match status" value="1"/>
</dbReference>
<reference key="1">
    <citation type="submission" date="2008-06" db="EMBL/GenBank/DDBJ databases">
        <authorList>
            <consortium name="NIH - Xenopus Gene Collection (XGC) project"/>
        </authorList>
    </citation>
    <scope>NUCLEOTIDE SEQUENCE [LARGE SCALE MRNA]</scope>
    <source>
        <tissue>Embryo</tissue>
    </source>
</reference>
<sequence length="144" mass="16351">MAAPSGDGSCEDFTEFQEILRVMRTIDDRIVHELNTTVPTVSFAGKIDAGQTCKQLYQSLQDAHASRDKAIKRCIAQTSTAVNNLQAERLKDSDNLALIKLLRKEQSKLKFLKSELNVEEVVNDRSLKVFNERCRLHYKPPKTE</sequence>
<name>MIX23_XENTR</name>
<keyword id="KW-0175">Coiled coil</keyword>
<keyword id="KW-1185">Reference proteome</keyword>
<evidence type="ECO:0000255" key="1"/>
<evidence type="ECO:0000305" key="2"/>
<comment type="similarity">
    <text evidence="2">Belongs to the MIX23 family.</text>
</comment>
<accession>B3DL65</accession>
<proteinExistence type="evidence at transcript level"/>
<gene>
    <name type="primary">mix23</name>
    <name type="synonym">ccdc58</name>
</gene>
<feature type="chain" id="PRO_0000360039" description="Protein MIX23">
    <location>
        <begin position="1"/>
        <end position="144"/>
    </location>
</feature>
<feature type="coiled-coil region" evidence="1">
    <location>
        <begin position="82"/>
        <end position="120"/>
    </location>
</feature>
<protein>
    <recommendedName>
        <fullName evidence="2">Protein MIX23</fullName>
    </recommendedName>
    <alternativeName>
        <fullName>Coiled-coil domain-containing protein 58</fullName>
    </alternativeName>
</protein>